<protein>
    <recommendedName>
        <fullName evidence="5">Isocitrate dehydrogenase [NADP]</fullName>
        <shortName evidence="5">ICD</shortName>
        <shortName>IDH</shortName>
        <ecNumber evidence="4">1.1.1.42</ecNumber>
    </recommendedName>
    <alternativeName>
        <fullName>Oxalosuccinate decarboxylase</fullName>
    </alternativeName>
</protein>
<proteinExistence type="evidence at protein level"/>
<keyword id="KW-0002">3D-structure</keyword>
<keyword id="KW-0963">Cytoplasm</keyword>
<keyword id="KW-0329">Glyoxylate bypass</keyword>
<keyword id="KW-0460">Magnesium</keyword>
<keyword id="KW-0464">Manganese</keyword>
<keyword id="KW-0479">Metal-binding</keyword>
<keyword id="KW-0521">NADP</keyword>
<keyword id="KW-0560">Oxidoreductase</keyword>
<keyword id="KW-1185">Reference proteome</keyword>
<keyword id="KW-0816">Tricarboxylic acid cycle</keyword>
<organism>
    <name type="scientific">Corynebacterium glutamicum (strain ATCC 13032 / DSM 20300 / JCM 1318 / BCRC 11384 / CCUG 27702 / LMG 3730 / NBRC 12168 / NCIMB 10025 / NRRL B-2784 / 534)</name>
    <dbReference type="NCBI Taxonomy" id="196627"/>
    <lineage>
        <taxon>Bacteria</taxon>
        <taxon>Bacillati</taxon>
        <taxon>Actinomycetota</taxon>
        <taxon>Actinomycetes</taxon>
        <taxon>Mycobacteriales</taxon>
        <taxon>Corynebacteriaceae</taxon>
        <taxon>Corynebacterium</taxon>
    </lineage>
</organism>
<sequence>MAKIIWTRTDEAPLLATYSLKPVVEAFAATAGIEVETRDISLAGRILAQFPERLTEDQKVGNALAELGELAKTPEANIIKLPNISASVPQLKAAIKELQDQGYDIPELPDNATTDEEKDILARYNAVKGSAVNPVLREGNSDRRAPIAVKNFVKKFPHRMGEWSADSKTNVATMDANDFRHNEKSIILDAADEVQIKHIAADGTETILKDSLKLLEGEVLDGTVLSAKALDAFLLEQVARAKAEGILFSAHLKATMMKVSDPIIFGHVVRAYFADVFAQYGEQLLAAGLNGENGLAAILSGLESLDNGEEIKAAFEKGLEDGPDLAMVNSARGITNLHVPSDVIVDASMPAMIRTSGHMWNKDDQEQDTLAIIPDSSYAGVYQTVIEDCRKNGAFDPTTMGTVPNVGLMAQKAEEYGSHDKTFRIEADGVVQVVSSNGDVLIEHDVEANDIWRACQVKDAPIQDWVKLAVTRSRLSGMPAVFWLDPERAHDRNLASLVEKYLADHDTEGLDIQILSPVEATQLSIDRIRRGEDTISVTGNVLRDYNTDLFPILELGTSAKMLSVVPLMAGGGLFETGAGGSAPKHVQQVQEENHLRWDSLGEFLALAESFRHELNNNGNTKAGVLADALDKATEKLLNEEKSPSRKVGEIDNRGSHFWLTKFWADELAAQTEDADLAATFAPVAEALNTGAADIDAALLAVQGGATDLGGYYSPNEEKLTNIMRPVAQFNEIVDALKK</sequence>
<name>IDH_CORGL</name>
<gene>
    <name evidence="5" type="primary">icd</name>
    <name type="ordered locus">Cgl0664</name>
    <name type="ordered locus">cg0766</name>
</gene>
<feature type="chain" id="PRO_0000083595" description="Isocitrate dehydrogenase [NADP]">
    <location>
        <begin position="1"/>
        <end position="738"/>
    </location>
</feature>
<feature type="binding site" evidence="1">
    <location>
        <position position="83"/>
    </location>
    <ligand>
        <name>NADP(+)</name>
        <dbReference type="ChEBI" id="CHEBI:58349"/>
    </ligand>
</feature>
<feature type="binding site" evidence="1">
    <location>
        <position position="85"/>
    </location>
    <ligand>
        <name>NADP(+)</name>
        <dbReference type="ChEBI" id="CHEBI:58349"/>
    </ligand>
</feature>
<feature type="binding site" evidence="1">
    <location>
        <position position="130"/>
    </location>
    <ligand>
        <name>D-threo-isocitrate</name>
        <dbReference type="ChEBI" id="CHEBI:15562"/>
    </ligand>
</feature>
<feature type="binding site" evidence="1">
    <location>
        <position position="133"/>
    </location>
    <ligand>
        <name>D-threo-isocitrate</name>
        <dbReference type="ChEBI" id="CHEBI:15562"/>
    </ligand>
</feature>
<feature type="binding site" evidence="1">
    <location>
        <position position="133"/>
    </location>
    <ligand>
        <name>NADP(+)</name>
        <dbReference type="ChEBI" id="CHEBI:58349"/>
    </ligand>
</feature>
<feature type="binding site" evidence="1">
    <location>
        <position position="137"/>
    </location>
    <ligand>
        <name>D-threo-isocitrate</name>
        <dbReference type="ChEBI" id="CHEBI:15562"/>
    </ligand>
</feature>
<feature type="binding site" evidence="1">
    <location>
        <position position="143"/>
    </location>
    <ligand>
        <name>D-threo-isocitrate</name>
        <dbReference type="ChEBI" id="CHEBI:15562"/>
    </ligand>
</feature>
<feature type="binding site" evidence="1">
    <location>
        <position position="253"/>
    </location>
    <ligand>
        <name>D-threo-isocitrate</name>
        <dbReference type="ChEBI" id="CHEBI:15562"/>
    </ligand>
</feature>
<feature type="binding site" evidence="2 3 9 10">
    <location>
        <position position="346"/>
    </location>
    <ligand>
        <name>Mg(2+)</name>
        <dbReference type="ChEBI" id="CHEBI:18420"/>
    </ligand>
</feature>
<feature type="binding site" evidence="1">
    <location>
        <position position="416"/>
    </location>
    <ligand>
        <name>D-threo-isocitrate</name>
        <dbReference type="ChEBI" id="CHEBI:15562"/>
    </ligand>
</feature>
<feature type="binding site" evidence="1">
    <location>
        <position position="543"/>
    </location>
    <ligand>
        <name>D-threo-isocitrate</name>
        <dbReference type="ChEBI" id="CHEBI:15562"/>
    </ligand>
</feature>
<feature type="binding site" evidence="2 3 9 10">
    <location>
        <position position="544"/>
    </location>
    <ligand>
        <name>Mg(2+)</name>
        <dbReference type="ChEBI" id="CHEBI:18420"/>
    </ligand>
</feature>
<feature type="binding site" evidence="2 3 9 10">
    <location>
        <position position="548"/>
    </location>
    <ligand>
        <name>Mg(2+)</name>
        <dbReference type="ChEBI" id="CHEBI:18420"/>
    </ligand>
</feature>
<feature type="binding site" evidence="3 10">
    <location>
        <position position="580"/>
    </location>
    <ligand>
        <name>NADP(+)</name>
        <dbReference type="ChEBI" id="CHEBI:58349"/>
    </ligand>
</feature>
<feature type="binding site" evidence="3 10">
    <location>
        <position position="585"/>
    </location>
    <ligand>
        <name>NADP(+)</name>
        <dbReference type="ChEBI" id="CHEBI:58349"/>
    </ligand>
</feature>
<feature type="binding site" evidence="3 10">
    <location>
        <position position="596"/>
    </location>
    <ligand>
        <name>NADP(+)</name>
        <dbReference type="ChEBI" id="CHEBI:58349"/>
    </ligand>
</feature>
<feature type="binding site" evidence="3 10">
    <location>
        <position position="598"/>
    </location>
    <ligand>
        <name>NADP(+)</name>
        <dbReference type="ChEBI" id="CHEBI:58349"/>
    </ligand>
</feature>
<feature type="binding site" evidence="3 10">
    <location>
        <position position="645"/>
    </location>
    <ligand>
        <name>NADP(+)</name>
        <dbReference type="ChEBI" id="CHEBI:58349"/>
    </ligand>
</feature>
<feature type="strand" evidence="11">
    <location>
        <begin position="3"/>
        <end position="8"/>
    </location>
</feature>
<feature type="helix" evidence="11">
    <location>
        <begin position="11"/>
        <end position="29"/>
    </location>
</feature>
<feature type="turn" evidence="11">
    <location>
        <begin position="30"/>
        <end position="32"/>
    </location>
</feature>
<feature type="strand" evidence="11">
    <location>
        <begin position="34"/>
        <end position="39"/>
    </location>
</feature>
<feature type="helix" evidence="11">
    <location>
        <begin position="42"/>
        <end position="47"/>
    </location>
</feature>
<feature type="helix" evidence="11">
    <location>
        <begin position="51"/>
        <end position="53"/>
    </location>
</feature>
<feature type="turn" evidence="11">
    <location>
        <begin position="56"/>
        <end position="58"/>
    </location>
</feature>
<feature type="helix" evidence="11">
    <location>
        <begin position="63"/>
        <end position="70"/>
    </location>
</feature>
<feature type="strand" evidence="11">
    <location>
        <begin position="77"/>
        <end position="80"/>
    </location>
</feature>
<feature type="helix" evidence="11">
    <location>
        <begin position="88"/>
        <end position="100"/>
    </location>
</feature>
<feature type="helix" evidence="11">
    <location>
        <begin position="115"/>
        <end position="125"/>
    </location>
</feature>
<feature type="strand" evidence="11">
    <location>
        <begin position="128"/>
        <end position="130"/>
    </location>
</feature>
<feature type="helix" evidence="11">
    <location>
        <begin position="132"/>
        <end position="136"/>
    </location>
</feature>
<feature type="strand" evidence="11">
    <location>
        <begin position="141"/>
        <end position="144"/>
    </location>
</feature>
<feature type="helix" evidence="11">
    <location>
        <begin position="147"/>
        <end position="155"/>
    </location>
</feature>
<feature type="strand" evidence="11">
    <location>
        <begin position="170"/>
        <end position="172"/>
    </location>
</feature>
<feature type="strand" evidence="11">
    <location>
        <begin position="175"/>
        <end position="178"/>
    </location>
</feature>
<feature type="helix" evidence="11">
    <location>
        <begin position="179"/>
        <end position="182"/>
    </location>
</feature>
<feature type="strand" evidence="11">
    <location>
        <begin position="184"/>
        <end position="187"/>
    </location>
</feature>
<feature type="strand" evidence="11">
    <location>
        <begin position="192"/>
        <end position="199"/>
    </location>
</feature>
<feature type="strand" evidence="11">
    <location>
        <begin position="205"/>
        <end position="214"/>
    </location>
</feature>
<feature type="strand" evidence="11">
    <location>
        <begin position="219"/>
        <end position="225"/>
    </location>
</feature>
<feature type="helix" evidence="11">
    <location>
        <begin position="227"/>
        <end position="244"/>
    </location>
</feature>
<feature type="strand" evidence="11">
    <location>
        <begin position="247"/>
        <end position="250"/>
    </location>
</feature>
<feature type="turn" evidence="11">
    <location>
        <begin position="254"/>
        <end position="256"/>
    </location>
</feature>
<feature type="helix" evidence="11">
    <location>
        <begin position="260"/>
        <end position="272"/>
    </location>
</feature>
<feature type="helix" evidence="11">
    <location>
        <begin position="274"/>
        <end position="286"/>
    </location>
</feature>
<feature type="helix" evidence="11">
    <location>
        <begin position="294"/>
        <end position="302"/>
    </location>
</feature>
<feature type="helix" evidence="11">
    <location>
        <begin position="308"/>
        <end position="321"/>
    </location>
</feature>
<feature type="strand" evidence="11">
    <location>
        <begin position="327"/>
        <end position="329"/>
    </location>
</feature>
<feature type="helix" evidence="11">
    <location>
        <begin position="330"/>
        <end position="332"/>
    </location>
</feature>
<feature type="strand" evidence="11">
    <location>
        <begin position="342"/>
        <end position="344"/>
    </location>
</feature>
<feature type="helix" evidence="11">
    <location>
        <begin position="345"/>
        <end position="354"/>
    </location>
</feature>
<feature type="turn" evidence="11">
    <location>
        <begin position="355"/>
        <end position="357"/>
    </location>
</feature>
<feature type="strand" evidence="11">
    <location>
        <begin position="358"/>
        <end position="360"/>
    </location>
</feature>
<feature type="strand" evidence="11">
    <location>
        <begin position="366"/>
        <end position="372"/>
    </location>
</feature>
<feature type="helix" evidence="11">
    <location>
        <begin position="376"/>
        <end position="392"/>
    </location>
</feature>
<feature type="turn" evidence="11">
    <location>
        <begin position="397"/>
        <end position="399"/>
    </location>
</feature>
<feature type="strand" evidence="11">
    <location>
        <begin position="405"/>
        <end position="407"/>
    </location>
</feature>
<feature type="turn" evidence="11">
    <location>
        <begin position="410"/>
        <end position="412"/>
    </location>
</feature>
<feature type="helix" evidence="11">
    <location>
        <begin position="414"/>
        <end position="417"/>
    </location>
</feature>
<feature type="helix" evidence="11">
    <location>
        <begin position="419"/>
        <end position="421"/>
    </location>
</feature>
<feature type="strand" evidence="11">
    <location>
        <begin position="422"/>
        <end position="424"/>
    </location>
</feature>
<feature type="strand" evidence="11">
    <location>
        <begin position="427"/>
        <end position="434"/>
    </location>
</feature>
<feature type="strand" evidence="11">
    <location>
        <begin position="440"/>
        <end position="446"/>
    </location>
</feature>
<feature type="strand" evidence="11">
    <location>
        <begin position="451"/>
        <end position="457"/>
    </location>
</feature>
<feature type="helix" evidence="11">
    <location>
        <begin position="459"/>
        <end position="476"/>
    </location>
</feature>
<feature type="strand" evidence="11">
    <location>
        <begin position="480"/>
        <end position="483"/>
    </location>
</feature>
<feature type="helix" evidence="11">
    <location>
        <begin position="489"/>
        <end position="502"/>
    </location>
</feature>
<feature type="strand" evidence="11">
    <location>
        <begin position="512"/>
        <end position="515"/>
    </location>
</feature>
<feature type="helix" evidence="11">
    <location>
        <begin position="517"/>
        <end position="529"/>
    </location>
</feature>
<feature type="strand" evidence="11">
    <location>
        <begin position="535"/>
        <end position="538"/>
    </location>
</feature>
<feature type="helix" evidence="11">
    <location>
        <begin position="540"/>
        <end position="555"/>
    </location>
</feature>
<feature type="strand" evidence="11">
    <location>
        <begin position="558"/>
        <end position="560"/>
    </location>
</feature>
<feature type="strand" evidence="11">
    <location>
        <begin position="562"/>
        <end position="567"/>
    </location>
</feature>
<feature type="strand" evidence="11">
    <location>
        <begin position="572"/>
        <end position="575"/>
    </location>
</feature>
<feature type="helix" evidence="11">
    <location>
        <begin position="583"/>
        <end position="592"/>
    </location>
</feature>
<feature type="helix" evidence="11">
    <location>
        <begin position="600"/>
        <end position="617"/>
    </location>
</feature>
<feature type="helix" evidence="11">
    <location>
        <begin position="620"/>
        <end position="638"/>
    </location>
</feature>
<feature type="helix" evidence="11">
    <location>
        <begin position="652"/>
        <end position="669"/>
    </location>
</feature>
<feature type="helix" evidence="11">
    <location>
        <begin position="674"/>
        <end position="700"/>
    </location>
</feature>
<feature type="strand" evidence="11">
    <location>
        <begin position="711"/>
        <end position="713"/>
    </location>
</feature>
<feature type="helix" evidence="11">
    <location>
        <begin position="716"/>
        <end position="723"/>
    </location>
</feature>
<feature type="helix" evidence="11">
    <location>
        <begin position="727"/>
        <end position="735"/>
    </location>
</feature>
<comment type="function">
    <text evidence="4">Catalyzes the oxidative decarboxylation of isocitrate to 2-oxoglutarate and carbon dioxide with the concomitant reduction of NADP(+) (PubMed:7836312). Cannot use NAD(+) (PubMed:7836312).</text>
</comment>
<comment type="catalytic activity">
    <reaction evidence="4">
        <text>D-threo-isocitrate + NADP(+) = 2-oxoglutarate + CO2 + NADPH</text>
        <dbReference type="Rhea" id="RHEA:19629"/>
        <dbReference type="ChEBI" id="CHEBI:15562"/>
        <dbReference type="ChEBI" id="CHEBI:16526"/>
        <dbReference type="ChEBI" id="CHEBI:16810"/>
        <dbReference type="ChEBI" id="CHEBI:57783"/>
        <dbReference type="ChEBI" id="CHEBI:58349"/>
        <dbReference type="EC" id="1.1.1.42"/>
    </reaction>
</comment>
<comment type="cofactor">
    <cofactor evidence="4">
        <name>Mg(2+)</name>
        <dbReference type="ChEBI" id="CHEBI:18420"/>
    </cofactor>
    <cofactor evidence="4">
        <name>Mn(2+)</name>
        <dbReference type="ChEBI" id="CHEBI:29035"/>
    </cofactor>
    <text evidence="4 7 8">Binds 1 Mg(2+) or Mn(2+) ion per subunit (Probable). Mn(2+) is the most effective cation in vitro (PubMed:7836312). Mg(2+) can partially replace Mn(2+), resulting in approximately 40% of the maximal activity (PubMed:7836312).</text>
</comment>
<comment type="activity regulation">
    <text evidence="4">Weakly inhibited by oxaloacetate, 2-oxoglutarate and citrate (PubMed:7836312). Severely inhibited by oxaloacetate plus glyoxylate (PubMed:7836312).</text>
</comment>
<comment type="biophysicochemical properties">
    <kinetics>
        <KM evidence="4">12 uM for D-threo-isocitrate</KM>
        <KM evidence="4">23 uM for D,L-isocitrate</KM>
        <KM evidence="4">24 uM for NADP(+)</KM>
    </kinetics>
    <phDependence>
        <text evidence="4">Optimum pH is 7.5-8.1.</text>
    </phDependence>
</comment>
<comment type="subunit">
    <text evidence="2 3 4">Monomer.</text>
</comment>
<comment type="subcellular location">
    <subcellularLocation>
        <location evidence="4">Cytoplasm</location>
    </subcellularLocation>
</comment>
<comment type="domain">
    <text evidence="2 3">Consists of two distinct domains, a small domain (domain I) and a large domain (domain II) (PubMed:16416443, PubMed:21931217). Binding of isocitrate probably induces a conformational change (PubMed:16416443, PubMed:21931217).</text>
</comment>
<comment type="disruption phenotype">
    <text evidence="4">Inactivation of the gene leads to glutamate auxotrophy and to the absence of any detectable IDH activity, suggesting that only a single IDH is present in C.glutamicum.</text>
</comment>
<comment type="similarity">
    <text evidence="6">Belongs to the monomeric-type IDH family.</text>
</comment>
<evidence type="ECO:0000250" key="1">
    <source>
        <dbReference type="UniProtKB" id="P16100"/>
    </source>
</evidence>
<evidence type="ECO:0000269" key="2">
    <source>
    </source>
</evidence>
<evidence type="ECO:0000269" key="3">
    <source>
    </source>
</evidence>
<evidence type="ECO:0000269" key="4">
    <source>
    </source>
</evidence>
<evidence type="ECO:0000303" key="5">
    <source>
    </source>
</evidence>
<evidence type="ECO:0000305" key="6"/>
<evidence type="ECO:0000305" key="7">
    <source>
    </source>
</evidence>
<evidence type="ECO:0000305" key="8">
    <source>
    </source>
</evidence>
<evidence type="ECO:0007744" key="9">
    <source>
        <dbReference type="PDB" id="2B0T"/>
    </source>
</evidence>
<evidence type="ECO:0007744" key="10">
    <source>
        <dbReference type="PDB" id="3MBC"/>
    </source>
</evidence>
<evidence type="ECO:0007829" key="11">
    <source>
        <dbReference type="PDB" id="2B0T"/>
    </source>
</evidence>
<reference key="1">
    <citation type="journal article" date="1995" name="J. Bacteriol.">
        <title>Cloning, sequence analysis, expression, and inactivation of the Corynebacterium glutamicum icd gene encoding isocitrate dehydrogenase and biochemical characterization of the enzyme.</title>
        <authorList>
            <person name="Eikmanns B.J."/>
            <person name="Rittmann D."/>
            <person name="Sahm H."/>
        </authorList>
    </citation>
    <scope>NUCLEOTIDE SEQUENCE [GENOMIC DNA]</scope>
    <scope>FUNCTION</scope>
    <scope>CATALYTIC ACTIVITY</scope>
    <scope>COFACTOR</scope>
    <scope>ACTIVITY REGULATION</scope>
    <scope>BIOPHYSICOCHEMICAL PROPERTIES</scope>
    <scope>SUBUNIT</scope>
    <scope>SUBCELLULAR LOCATION</scope>
    <scope>DISRUPTION PHENOTYPE</scope>
    <source>
        <strain>ATCC 13032 / DSM 20300 / JCM 1318 / BCRC 11384 / CCUG 27702 / LMG 3730 / NBRC 12168 / NCIMB 10025 / NRRL B-2784 / 534</strain>
    </source>
</reference>
<reference key="2">
    <citation type="journal article" date="2003" name="Appl. Microbiol. Biotechnol.">
        <title>The Corynebacterium glutamicum genome: features and impacts on biotechnological processes.</title>
        <authorList>
            <person name="Ikeda M."/>
            <person name="Nakagawa S."/>
        </authorList>
    </citation>
    <scope>NUCLEOTIDE SEQUENCE [LARGE SCALE GENOMIC DNA]</scope>
    <source>
        <strain>ATCC 13032 / DSM 20300 / JCM 1318 / BCRC 11384 / CCUG 27702 / LMG 3730 / NBRC 12168 / NCIMB 10025 / NRRL B-2784 / 534</strain>
    </source>
</reference>
<reference key="3">
    <citation type="journal article" date="2003" name="J. Biotechnol.">
        <title>The complete Corynebacterium glutamicum ATCC 13032 genome sequence and its impact on the production of L-aspartate-derived amino acids and vitamins.</title>
        <authorList>
            <person name="Kalinowski J."/>
            <person name="Bathe B."/>
            <person name="Bartels D."/>
            <person name="Bischoff N."/>
            <person name="Bott M."/>
            <person name="Burkovski A."/>
            <person name="Dusch N."/>
            <person name="Eggeling L."/>
            <person name="Eikmanns B.J."/>
            <person name="Gaigalat L."/>
            <person name="Goesmann A."/>
            <person name="Hartmann M."/>
            <person name="Huthmacher K."/>
            <person name="Kraemer R."/>
            <person name="Linke B."/>
            <person name="McHardy A.C."/>
            <person name="Meyer F."/>
            <person name="Moeckel B."/>
            <person name="Pfefferle W."/>
            <person name="Puehler A."/>
            <person name="Rey D.A."/>
            <person name="Rueckert C."/>
            <person name="Rupp O."/>
            <person name="Sahm H."/>
            <person name="Wendisch V.F."/>
            <person name="Wiegraebe I."/>
            <person name="Tauch A."/>
        </authorList>
    </citation>
    <scope>NUCLEOTIDE SEQUENCE [LARGE SCALE GENOMIC DNA]</scope>
    <source>
        <strain>ATCC 13032 / DSM 20300 / JCM 1318 / BCRC 11384 / CCUG 27702 / LMG 3730 / NBRC 12168 / NCIMB 10025 / NRRL B-2784 / 534</strain>
    </source>
</reference>
<reference evidence="9" key="4">
    <citation type="journal article" date="2006" name="Proteins">
        <title>Substrate-free structure of a monomeric NADP isocitrate dehydrogenase: an open conformation phylogenetic relationship of isocitrate dehydrogenase.</title>
        <authorList>
            <person name="Imabayashi F."/>
            <person name="Aich S."/>
            <person name="Prasad L."/>
            <person name="Delbaere L.T."/>
        </authorList>
    </citation>
    <scope>X-RAY CRYSTALLOGRAPHY (1.75 ANGSTROMS) IN COMPLEX WITH MG(2+)</scope>
    <scope>SUBUNIT</scope>
    <scope>DOMAIN</scope>
</reference>
<reference evidence="10" key="5">
    <citation type="journal article" date="2011" name="Acta Crystallogr. D">
        <title>Structure of a highly NADP+-specific isocitrate dehydrogenase.</title>
        <authorList>
            <person name="Sidhu N.S."/>
            <person name="Delbaere L.T."/>
            <person name="Sheldrick G.M."/>
        </authorList>
    </citation>
    <scope>X-RAY CRYSTALLOGRAPHY (1.90 ANGSTROMS) IN COMPLEX WITH MG(2+) AND NADP(+)</scope>
    <scope>SUBUNIT</scope>
    <scope>DOMAIN</scope>
</reference>
<dbReference type="EC" id="1.1.1.42" evidence="4"/>
<dbReference type="EMBL" id="X71489">
    <property type="protein sequence ID" value="CAA50590.1"/>
    <property type="molecule type" value="Genomic_DNA"/>
</dbReference>
<dbReference type="EMBL" id="BA000036">
    <property type="protein sequence ID" value="BAB98057.1"/>
    <property type="molecule type" value="Genomic_DNA"/>
</dbReference>
<dbReference type="EMBL" id="BX927149">
    <property type="protein sequence ID" value="CAF19369.1"/>
    <property type="molecule type" value="Genomic_DNA"/>
</dbReference>
<dbReference type="PIR" id="I40719">
    <property type="entry name" value="I40719"/>
</dbReference>
<dbReference type="RefSeq" id="NP_599896.1">
    <property type="nucleotide sequence ID" value="NC_003450.3"/>
</dbReference>
<dbReference type="RefSeq" id="WP_011013800.1">
    <property type="nucleotide sequence ID" value="NC_006958.1"/>
</dbReference>
<dbReference type="PDB" id="2B0T">
    <property type="method" value="X-ray"/>
    <property type="resolution" value="1.75 A"/>
    <property type="chains" value="A=1-738"/>
</dbReference>
<dbReference type="PDB" id="3MBC">
    <property type="method" value="X-ray"/>
    <property type="resolution" value="1.90 A"/>
    <property type="chains" value="A/B=1-738"/>
</dbReference>
<dbReference type="PDBsum" id="2B0T"/>
<dbReference type="PDBsum" id="3MBC"/>
<dbReference type="SMR" id="P50216"/>
<dbReference type="STRING" id="196627.cg0766"/>
<dbReference type="KEGG" id="cgb:cg0766"/>
<dbReference type="KEGG" id="cgl:Cgl0664"/>
<dbReference type="PATRIC" id="fig|196627.13.peg.650"/>
<dbReference type="eggNOG" id="COG2838">
    <property type="taxonomic scope" value="Bacteria"/>
</dbReference>
<dbReference type="HOGENOM" id="CLU_025308_1_0_11"/>
<dbReference type="OrthoDB" id="9807643at2"/>
<dbReference type="BioCyc" id="CORYNE:G18NG-10226-MONOMER"/>
<dbReference type="BRENDA" id="1.1.1.42">
    <property type="organism ID" value="960"/>
</dbReference>
<dbReference type="EvolutionaryTrace" id="P50216"/>
<dbReference type="Proteomes" id="UP000000582">
    <property type="component" value="Chromosome"/>
</dbReference>
<dbReference type="Proteomes" id="UP000001009">
    <property type="component" value="Chromosome"/>
</dbReference>
<dbReference type="GO" id="GO:0005737">
    <property type="term" value="C:cytoplasm"/>
    <property type="evidence" value="ECO:0007669"/>
    <property type="project" value="UniProtKB-SubCell"/>
</dbReference>
<dbReference type="GO" id="GO:0004450">
    <property type="term" value="F:isocitrate dehydrogenase (NADP+) activity"/>
    <property type="evidence" value="ECO:0007669"/>
    <property type="project" value="UniProtKB-EC"/>
</dbReference>
<dbReference type="GO" id="GO:0046872">
    <property type="term" value="F:metal ion binding"/>
    <property type="evidence" value="ECO:0007669"/>
    <property type="project" value="UniProtKB-KW"/>
</dbReference>
<dbReference type="GO" id="GO:0006097">
    <property type="term" value="P:glyoxylate cycle"/>
    <property type="evidence" value="ECO:0007669"/>
    <property type="project" value="UniProtKB-KW"/>
</dbReference>
<dbReference type="GO" id="GO:0006099">
    <property type="term" value="P:tricarboxylic acid cycle"/>
    <property type="evidence" value="ECO:0007669"/>
    <property type="project" value="UniProtKB-KW"/>
</dbReference>
<dbReference type="InterPro" id="IPR004436">
    <property type="entry name" value="Isocitrate_DH_NADP_mono"/>
</dbReference>
<dbReference type="NCBIfam" id="TIGR00178">
    <property type="entry name" value="monomer_idh"/>
    <property type="match status" value="1"/>
</dbReference>
<dbReference type="PANTHER" id="PTHR36999:SF1">
    <property type="entry name" value="ISOCITRATE DEHYDROGENASE (NADP(+))"/>
    <property type="match status" value="1"/>
</dbReference>
<dbReference type="PANTHER" id="PTHR36999">
    <property type="entry name" value="ISOCITRATE DEHYDROGENASE [NADP]"/>
    <property type="match status" value="1"/>
</dbReference>
<dbReference type="Pfam" id="PF03971">
    <property type="entry name" value="IDH"/>
    <property type="match status" value="1"/>
</dbReference>
<dbReference type="PIRSF" id="PIRSF009407">
    <property type="entry name" value="IDH_monmr"/>
    <property type="match status" value="1"/>
</dbReference>
<dbReference type="SUPFAM" id="SSF53659">
    <property type="entry name" value="Isocitrate/Isopropylmalate dehydrogenase-like"/>
    <property type="match status" value="1"/>
</dbReference>
<accession>P50216</accession>